<feature type="chain" id="PRO_0000121636" description="tRNA-specific 2-thiouridylase MnmA">
    <location>
        <begin position="1"/>
        <end position="383"/>
    </location>
</feature>
<feature type="region of interest" description="Interaction with target base in tRNA" evidence="1">
    <location>
        <begin position="116"/>
        <end position="118"/>
    </location>
</feature>
<feature type="region of interest" description="Interaction with tRNA" evidence="1">
    <location>
        <begin position="168"/>
        <end position="170"/>
    </location>
</feature>
<feature type="region of interest" description="Interaction with tRNA" evidence="1">
    <location>
        <begin position="330"/>
        <end position="331"/>
    </location>
</feature>
<feature type="active site" description="Nucleophile" evidence="1">
    <location>
        <position position="121"/>
    </location>
</feature>
<feature type="active site" description="Cysteine persulfide intermediate" evidence="1">
    <location>
        <position position="218"/>
    </location>
</feature>
<feature type="binding site" evidence="1">
    <location>
        <begin position="30"/>
        <end position="37"/>
    </location>
    <ligand>
        <name>ATP</name>
        <dbReference type="ChEBI" id="CHEBI:30616"/>
    </ligand>
</feature>
<feature type="binding site" evidence="1">
    <location>
        <position position="56"/>
    </location>
    <ligand>
        <name>ATP</name>
        <dbReference type="ChEBI" id="CHEBI:30616"/>
    </ligand>
</feature>
<feature type="binding site" evidence="1">
    <location>
        <position position="146"/>
    </location>
    <ligand>
        <name>ATP</name>
        <dbReference type="ChEBI" id="CHEBI:30616"/>
    </ligand>
</feature>
<feature type="site" description="Interaction with tRNA" evidence="1">
    <location>
        <position position="147"/>
    </location>
</feature>
<feature type="site" description="Interaction with tRNA" evidence="1">
    <location>
        <position position="363"/>
    </location>
</feature>
<feature type="disulfide bond" description="Alternate" evidence="1">
    <location>
        <begin position="121"/>
        <end position="218"/>
    </location>
</feature>
<accession>P44551</accession>
<comment type="function">
    <text evidence="1">Catalyzes the 2-thiolation of uridine at the wobble position (U34) of tRNA, leading to the formation of s(2)U34.</text>
</comment>
<comment type="catalytic activity">
    <reaction evidence="1">
        <text>S-sulfanyl-L-cysteinyl-[protein] + uridine(34) in tRNA + AH2 + ATP = 2-thiouridine(34) in tRNA + L-cysteinyl-[protein] + A + AMP + diphosphate + H(+)</text>
        <dbReference type="Rhea" id="RHEA:47032"/>
        <dbReference type="Rhea" id="RHEA-COMP:10131"/>
        <dbReference type="Rhea" id="RHEA-COMP:11726"/>
        <dbReference type="Rhea" id="RHEA-COMP:11727"/>
        <dbReference type="Rhea" id="RHEA-COMP:11728"/>
        <dbReference type="ChEBI" id="CHEBI:13193"/>
        <dbReference type="ChEBI" id="CHEBI:15378"/>
        <dbReference type="ChEBI" id="CHEBI:17499"/>
        <dbReference type="ChEBI" id="CHEBI:29950"/>
        <dbReference type="ChEBI" id="CHEBI:30616"/>
        <dbReference type="ChEBI" id="CHEBI:33019"/>
        <dbReference type="ChEBI" id="CHEBI:61963"/>
        <dbReference type="ChEBI" id="CHEBI:65315"/>
        <dbReference type="ChEBI" id="CHEBI:87170"/>
        <dbReference type="ChEBI" id="CHEBI:456215"/>
        <dbReference type="EC" id="2.8.1.13"/>
    </reaction>
</comment>
<comment type="subcellular location">
    <subcellularLocation>
        <location evidence="1">Cytoplasm</location>
    </subcellularLocation>
</comment>
<comment type="similarity">
    <text evidence="1">Belongs to the MnmA/TRMU family.</text>
</comment>
<comment type="sequence caution" evidence="2">
    <conflict type="erroneous initiation">
        <sequence resource="EMBL-CDS" id="AAC21843"/>
    </conflict>
</comment>
<evidence type="ECO:0000255" key="1">
    <source>
        <dbReference type="HAMAP-Rule" id="MF_00144"/>
    </source>
</evidence>
<evidence type="ECO:0000305" key="2"/>
<gene>
    <name evidence="1" type="primary">mnmA</name>
    <name type="synonym">trmU</name>
    <name type="ordered locus">HI_0174</name>
</gene>
<dbReference type="EC" id="2.8.1.13" evidence="1"/>
<dbReference type="EMBL" id="L42023">
    <property type="protein sequence ID" value="AAC21843.1"/>
    <property type="status" value="ALT_INIT"/>
    <property type="molecule type" value="Genomic_DNA"/>
</dbReference>
<dbReference type="RefSeq" id="NP_438342.1">
    <property type="nucleotide sequence ID" value="NC_000907.1"/>
</dbReference>
<dbReference type="SMR" id="P44551"/>
<dbReference type="STRING" id="71421.HI_0174"/>
<dbReference type="DNASU" id="951080"/>
<dbReference type="EnsemblBacteria" id="AAC21843">
    <property type="protein sequence ID" value="AAC21843"/>
    <property type="gene ID" value="HI_0174"/>
</dbReference>
<dbReference type="KEGG" id="hin:HI_0174"/>
<dbReference type="PATRIC" id="fig|71421.8.peg.178"/>
<dbReference type="eggNOG" id="COG0482">
    <property type="taxonomic scope" value="Bacteria"/>
</dbReference>
<dbReference type="HOGENOM" id="CLU_035188_1_0_6"/>
<dbReference type="OrthoDB" id="9800696at2"/>
<dbReference type="PhylomeDB" id="P44551"/>
<dbReference type="Proteomes" id="UP000000579">
    <property type="component" value="Chromosome"/>
</dbReference>
<dbReference type="GO" id="GO:0005737">
    <property type="term" value="C:cytoplasm"/>
    <property type="evidence" value="ECO:0007669"/>
    <property type="project" value="UniProtKB-SubCell"/>
</dbReference>
<dbReference type="GO" id="GO:0005524">
    <property type="term" value="F:ATP binding"/>
    <property type="evidence" value="ECO:0007669"/>
    <property type="project" value="UniProtKB-KW"/>
</dbReference>
<dbReference type="GO" id="GO:0000049">
    <property type="term" value="F:tRNA binding"/>
    <property type="evidence" value="ECO:0007669"/>
    <property type="project" value="UniProtKB-KW"/>
</dbReference>
<dbReference type="GO" id="GO:0103016">
    <property type="term" value="F:tRNA-uridine 2-sulfurtransferase activity"/>
    <property type="evidence" value="ECO:0007669"/>
    <property type="project" value="UniProtKB-EC"/>
</dbReference>
<dbReference type="GO" id="GO:0002143">
    <property type="term" value="P:tRNA wobble position uridine thiolation"/>
    <property type="evidence" value="ECO:0000318"/>
    <property type="project" value="GO_Central"/>
</dbReference>
<dbReference type="CDD" id="cd01998">
    <property type="entry name" value="MnmA_TRMU-like"/>
    <property type="match status" value="1"/>
</dbReference>
<dbReference type="FunFam" id="2.30.30.280:FF:000001">
    <property type="entry name" value="tRNA-specific 2-thiouridylase MnmA"/>
    <property type="match status" value="1"/>
</dbReference>
<dbReference type="FunFam" id="2.40.30.10:FF:000023">
    <property type="entry name" value="tRNA-specific 2-thiouridylase MnmA"/>
    <property type="match status" value="1"/>
</dbReference>
<dbReference type="FunFam" id="3.40.50.620:FF:000004">
    <property type="entry name" value="tRNA-specific 2-thiouridylase MnmA"/>
    <property type="match status" value="1"/>
</dbReference>
<dbReference type="Gene3D" id="2.30.30.280">
    <property type="entry name" value="Adenine nucleotide alpha hydrolases-like domains"/>
    <property type="match status" value="1"/>
</dbReference>
<dbReference type="Gene3D" id="3.40.50.620">
    <property type="entry name" value="HUPs"/>
    <property type="match status" value="1"/>
</dbReference>
<dbReference type="Gene3D" id="2.40.30.10">
    <property type="entry name" value="Translation factors"/>
    <property type="match status" value="1"/>
</dbReference>
<dbReference type="HAMAP" id="MF_00144">
    <property type="entry name" value="tRNA_thiouridyl_MnmA"/>
    <property type="match status" value="1"/>
</dbReference>
<dbReference type="InterPro" id="IPR004506">
    <property type="entry name" value="MnmA-like"/>
</dbReference>
<dbReference type="InterPro" id="IPR046885">
    <property type="entry name" value="MnmA-like_C"/>
</dbReference>
<dbReference type="InterPro" id="IPR046884">
    <property type="entry name" value="MnmA-like_central"/>
</dbReference>
<dbReference type="InterPro" id="IPR023382">
    <property type="entry name" value="MnmA-like_central_sf"/>
</dbReference>
<dbReference type="InterPro" id="IPR014729">
    <property type="entry name" value="Rossmann-like_a/b/a_fold"/>
</dbReference>
<dbReference type="NCBIfam" id="NF001138">
    <property type="entry name" value="PRK00143.1"/>
    <property type="match status" value="1"/>
</dbReference>
<dbReference type="NCBIfam" id="TIGR00420">
    <property type="entry name" value="trmU"/>
    <property type="match status" value="1"/>
</dbReference>
<dbReference type="PANTHER" id="PTHR11933:SF5">
    <property type="entry name" value="MITOCHONDRIAL TRNA-SPECIFIC 2-THIOURIDYLASE 1"/>
    <property type="match status" value="1"/>
</dbReference>
<dbReference type="PANTHER" id="PTHR11933">
    <property type="entry name" value="TRNA 5-METHYLAMINOMETHYL-2-THIOURIDYLATE -METHYLTRANSFERASE"/>
    <property type="match status" value="1"/>
</dbReference>
<dbReference type="Pfam" id="PF03054">
    <property type="entry name" value="tRNA_Me_trans"/>
    <property type="match status" value="1"/>
</dbReference>
<dbReference type="Pfam" id="PF20258">
    <property type="entry name" value="tRNA_Me_trans_C"/>
    <property type="match status" value="1"/>
</dbReference>
<dbReference type="Pfam" id="PF20259">
    <property type="entry name" value="tRNA_Me_trans_M"/>
    <property type="match status" value="1"/>
</dbReference>
<dbReference type="SUPFAM" id="SSF52402">
    <property type="entry name" value="Adenine nucleotide alpha hydrolases-like"/>
    <property type="match status" value="1"/>
</dbReference>
<sequence length="383" mass="42938">MLISNTYNQHFPQLTQEQLARNATKKVICGMSGGVDSSVSAFILQQQGYQVEGLFMKNWEEDDDTDYCTAAADLADAQAVCDKLGIKLHKINFAAEYWDNVFEHFLTEYKAGRTPNPDILCNKEIKFKAFLEYAAEDLGADYIATGHYVRRAGDNENAKLLRGLDPNKDQSYFLYTLSHKQVGQSLFPVGEIEKPIVRAIAEDLGLITAKKKDSTGICFIGERKFKDFLARYLPAQPGNIRTVDDEIIGRHDGLMYHTLGQRKGLGIGGLKNAGDEAWYVVDKDVENNELIVAQGHDHPRLFSKGLIASQLHWVDREPIRESLRCTVKTRYRQQDIPCVIEPIDDETIRVIFDEPQSAVTPGQSAVFYLGEVCLGGGIIAERI</sequence>
<protein>
    <recommendedName>
        <fullName evidence="1">tRNA-specific 2-thiouridylase MnmA</fullName>
        <ecNumber evidence="1">2.8.1.13</ecNumber>
    </recommendedName>
</protein>
<organism>
    <name type="scientific">Haemophilus influenzae (strain ATCC 51907 / DSM 11121 / KW20 / Rd)</name>
    <dbReference type="NCBI Taxonomy" id="71421"/>
    <lineage>
        <taxon>Bacteria</taxon>
        <taxon>Pseudomonadati</taxon>
        <taxon>Pseudomonadota</taxon>
        <taxon>Gammaproteobacteria</taxon>
        <taxon>Pasteurellales</taxon>
        <taxon>Pasteurellaceae</taxon>
        <taxon>Haemophilus</taxon>
    </lineage>
</organism>
<reference key="1">
    <citation type="journal article" date="1995" name="Science">
        <title>Whole-genome random sequencing and assembly of Haemophilus influenzae Rd.</title>
        <authorList>
            <person name="Fleischmann R.D."/>
            <person name="Adams M.D."/>
            <person name="White O."/>
            <person name="Clayton R.A."/>
            <person name="Kirkness E.F."/>
            <person name="Kerlavage A.R."/>
            <person name="Bult C.J."/>
            <person name="Tomb J.-F."/>
            <person name="Dougherty B.A."/>
            <person name="Merrick J.M."/>
            <person name="McKenney K."/>
            <person name="Sutton G.G."/>
            <person name="FitzHugh W."/>
            <person name="Fields C.A."/>
            <person name="Gocayne J.D."/>
            <person name="Scott J.D."/>
            <person name="Shirley R."/>
            <person name="Liu L.-I."/>
            <person name="Glodek A."/>
            <person name="Kelley J.M."/>
            <person name="Weidman J.F."/>
            <person name="Phillips C.A."/>
            <person name="Spriggs T."/>
            <person name="Hedblom E."/>
            <person name="Cotton M.D."/>
            <person name="Utterback T.R."/>
            <person name="Hanna M.C."/>
            <person name="Nguyen D.T."/>
            <person name="Saudek D.M."/>
            <person name="Brandon R.C."/>
            <person name="Fine L.D."/>
            <person name="Fritchman J.L."/>
            <person name="Fuhrmann J.L."/>
            <person name="Geoghagen N.S.M."/>
            <person name="Gnehm C.L."/>
            <person name="McDonald L.A."/>
            <person name="Small K.V."/>
            <person name="Fraser C.M."/>
            <person name="Smith H.O."/>
            <person name="Venter J.C."/>
        </authorList>
    </citation>
    <scope>NUCLEOTIDE SEQUENCE [LARGE SCALE GENOMIC DNA]</scope>
    <source>
        <strain>ATCC 51907 / DSM 11121 / KW20 / Rd</strain>
    </source>
</reference>
<proteinExistence type="inferred from homology"/>
<keyword id="KW-0067">ATP-binding</keyword>
<keyword id="KW-0963">Cytoplasm</keyword>
<keyword id="KW-1015">Disulfide bond</keyword>
<keyword id="KW-0547">Nucleotide-binding</keyword>
<keyword id="KW-1185">Reference proteome</keyword>
<keyword id="KW-0694">RNA-binding</keyword>
<keyword id="KW-0808">Transferase</keyword>
<keyword id="KW-0819">tRNA processing</keyword>
<keyword id="KW-0820">tRNA-binding</keyword>
<name>MNMA_HAEIN</name>